<comment type="function">
    <text evidence="3 4">Hydrolase highly specific for thiamine triphosphate (ThTP).</text>
</comment>
<comment type="catalytic activity">
    <reaction evidence="4">
        <text>thiamine triphosphate + H2O = thiamine diphosphate + phosphate + H(+)</text>
        <dbReference type="Rhea" id="RHEA:11744"/>
        <dbReference type="ChEBI" id="CHEBI:15377"/>
        <dbReference type="ChEBI" id="CHEBI:15378"/>
        <dbReference type="ChEBI" id="CHEBI:43474"/>
        <dbReference type="ChEBI" id="CHEBI:58937"/>
        <dbReference type="ChEBI" id="CHEBI:58938"/>
        <dbReference type="EC" id="3.6.1.28"/>
    </reaction>
</comment>
<comment type="cofactor">
    <cofactor evidence="4">
        <name>Mg(2+)</name>
        <dbReference type="ChEBI" id="CHEBI:18420"/>
    </cofactor>
    <text evidence="4">Binds 1 Mg(2+) ion per subunit.</text>
</comment>
<comment type="biophysicochemical properties">
    <kinetics>
        <KM evidence="4">8 uM for thiamine triphosphate</KM>
        <Vmax evidence="4">59.0 umol/min/mg enzyme</Vmax>
    </kinetics>
</comment>
<comment type="subunit">
    <text evidence="4">Monomer.</text>
</comment>
<comment type="interaction">
    <interactant intactId="EBI-2820864">
        <id>Q9BU02</id>
    </interactant>
    <interactant intactId="EBI-3939165">
        <id>O43711</id>
        <label>TLX3</label>
    </interactant>
    <organismsDiffer>false</organismsDiffer>
    <experiments>3</experiments>
</comment>
<comment type="subcellular location">
    <subcellularLocation>
        <location evidence="3">Cytoplasm</location>
    </subcellularLocation>
</comment>
<comment type="alternative products">
    <event type="alternative splicing"/>
    <isoform>
        <id>Q9BU02-1</id>
        <name>1</name>
        <sequence type="displayed"/>
    </isoform>
    <isoform>
        <id>Q9BU02-2</id>
        <name>2</name>
        <sequence type="described" ref="VSP_047213 VSP_047214"/>
    </isoform>
</comment>
<comment type="tissue specificity">
    <text evidence="3">Widely expressed but at a low level.</text>
</comment>
<comment type="similarity">
    <text evidence="6">Belongs to the ThTPase family.</text>
</comment>
<organism>
    <name type="scientific">Homo sapiens</name>
    <name type="common">Human</name>
    <dbReference type="NCBI Taxonomy" id="9606"/>
    <lineage>
        <taxon>Eukaryota</taxon>
        <taxon>Metazoa</taxon>
        <taxon>Chordata</taxon>
        <taxon>Craniata</taxon>
        <taxon>Vertebrata</taxon>
        <taxon>Euteleostomi</taxon>
        <taxon>Mammalia</taxon>
        <taxon>Eutheria</taxon>
        <taxon>Euarchontoglires</taxon>
        <taxon>Primates</taxon>
        <taxon>Haplorrhini</taxon>
        <taxon>Catarrhini</taxon>
        <taxon>Hominidae</taxon>
        <taxon>Homo</taxon>
    </lineage>
</organism>
<reference key="1">
    <citation type="journal article" date="2002" name="J. Biol. Chem.">
        <title>Molecular characterization of a specific thiamine triphosphatase widely expressed in mammalian tissues.</title>
        <authorList>
            <person name="Lakaye B."/>
            <person name="Makarchikov A.F."/>
            <person name="Antunes A.F."/>
            <person name="Zorzi W."/>
            <person name="Coumans B."/>
            <person name="De Pauw E."/>
            <person name="Wins P."/>
            <person name="Grisar T."/>
            <person name="Bettendorff L."/>
        </authorList>
    </citation>
    <scope>NUCLEOTIDE SEQUENCE [MRNA] (ISOFORM 1)</scope>
    <scope>FUNCTION</scope>
    <scope>SUBCELLULAR LOCATION</scope>
    <scope>TISSUE SPECIFICITY</scope>
    <source>
        <tissue>Brain</tissue>
    </source>
</reference>
<reference key="2">
    <citation type="journal article" date="2004" name="Nat. Genet.">
        <title>Complete sequencing and characterization of 21,243 full-length human cDNAs.</title>
        <authorList>
            <person name="Ota T."/>
            <person name="Suzuki Y."/>
            <person name="Nishikawa T."/>
            <person name="Otsuki T."/>
            <person name="Sugiyama T."/>
            <person name="Irie R."/>
            <person name="Wakamatsu A."/>
            <person name="Hayashi K."/>
            <person name="Sato H."/>
            <person name="Nagai K."/>
            <person name="Kimura K."/>
            <person name="Makita H."/>
            <person name="Sekine M."/>
            <person name="Obayashi M."/>
            <person name="Nishi T."/>
            <person name="Shibahara T."/>
            <person name="Tanaka T."/>
            <person name="Ishii S."/>
            <person name="Yamamoto J."/>
            <person name="Saito K."/>
            <person name="Kawai Y."/>
            <person name="Isono Y."/>
            <person name="Nakamura Y."/>
            <person name="Nagahari K."/>
            <person name="Murakami K."/>
            <person name="Yasuda T."/>
            <person name="Iwayanagi T."/>
            <person name="Wagatsuma M."/>
            <person name="Shiratori A."/>
            <person name="Sudo H."/>
            <person name="Hosoiri T."/>
            <person name="Kaku Y."/>
            <person name="Kodaira H."/>
            <person name="Kondo H."/>
            <person name="Sugawara M."/>
            <person name="Takahashi M."/>
            <person name="Kanda K."/>
            <person name="Yokoi T."/>
            <person name="Furuya T."/>
            <person name="Kikkawa E."/>
            <person name="Omura Y."/>
            <person name="Abe K."/>
            <person name="Kamihara K."/>
            <person name="Katsuta N."/>
            <person name="Sato K."/>
            <person name="Tanikawa M."/>
            <person name="Yamazaki M."/>
            <person name="Ninomiya K."/>
            <person name="Ishibashi T."/>
            <person name="Yamashita H."/>
            <person name="Murakawa K."/>
            <person name="Fujimori K."/>
            <person name="Tanai H."/>
            <person name="Kimata M."/>
            <person name="Watanabe M."/>
            <person name="Hiraoka S."/>
            <person name="Chiba Y."/>
            <person name="Ishida S."/>
            <person name="Ono Y."/>
            <person name="Takiguchi S."/>
            <person name="Watanabe S."/>
            <person name="Yosida M."/>
            <person name="Hotuta T."/>
            <person name="Kusano J."/>
            <person name="Kanehori K."/>
            <person name="Takahashi-Fujii A."/>
            <person name="Hara H."/>
            <person name="Tanase T.-O."/>
            <person name="Nomura Y."/>
            <person name="Togiya S."/>
            <person name="Komai F."/>
            <person name="Hara R."/>
            <person name="Takeuchi K."/>
            <person name="Arita M."/>
            <person name="Imose N."/>
            <person name="Musashino K."/>
            <person name="Yuuki H."/>
            <person name="Oshima A."/>
            <person name="Sasaki N."/>
            <person name="Aotsuka S."/>
            <person name="Yoshikawa Y."/>
            <person name="Matsunawa H."/>
            <person name="Ichihara T."/>
            <person name="Shiohata N."/>
            <person name="Sano S."/>
            <person name="Moriya S."/>
            <person name="Momiyama H."/>
            <person name="Satoh N."/>
            <person name="Takami S."/>
            <person name="Terashima Y."/>
            <person name="Suzuki O."/>
            <person name="Nakagawa S."/>
            <person name="Senoh A."/>
            <person name="Mizoguchi H."/>
            <person name="Goto Y."/>
            <person name="Shimizu F."/>
            <person name="Wakebe H."/>
            <person name="Hishigaki H."/>
            <person name="Watanabe T."/>
            <person name="Sugiyama A."/>
            <person name="Takemoto M."/>
            <person name="Kawakami B."/>
            <person name="Yamazaki M."/>
            <person name="Watanabe K."/>
            <person name="Kumagai A."/>
            <person name="Itakura S."/>
            <person name="Fukuzumi Y."/>
            <person name="Fujimori Y."/>
            <person name="Komiyama M."/>
            <person name="Tashiro H."/>
            <person name="Tanigami A."/>
            <person name="Fujiwara T."/>
            <person name="Ono T."/>
            <person name="Yamada K."/>
            <person name="Fujii Y."/>
            <person name="Ozaki K."/>
            <person name="Hirao M."/>
            <person name="Ohmori Y."/>
            <person name="Kawabata A."/>
            <person name="Hikiji T."/>
            <person name="Kobatake N."/>
            <person name="Inagaki H."/>
            <person name="Ikema Y."/>
            <person name="Okamoto S."/>
            <person name="Okitani R."/>
            <person name="Kawakami T."/>
            <person name="Noguchi S."/>
            <person name="Itoh T."/>
            <person name="Shigeta K."/>
            <person name="Senba T."/>
            <person name="Matsumura K."/>
            <person name="Nakajima Y."/>
            <person name="Mizuno T."/>
            <person name="Morinaga M."/>
            <person name="Sasaki M."/>
            <person name="Togashi T."/>
            <person name="Oyama M."/>
            <person name="Hata H."/>
            <person name="Watanabe M."/>
            <person name="Komatsu T."/>
            <person name="Mizushima-Sugano J."/>
            <person name="Satoh T."/>
            <person name="Shirai Y."/>
            <person name="Takahashi Y."/>
            <person name="Nakagawa K."/>
            <person name="Okumura K."/>
            <person name="Nagase T."/>
            <person name="Nomura N."/>
            <person name="Kikuchi H."/>
            <person name="Masuho Y."/>
            <person name="Yamashita R."/>
            <person name="Nakai K."/>
            <person name="Yada T."/>
            <person name="Nakamura Y."/>
            <person name="Ohara O."/>
            <person name="Isogai T."/>
            <person name="Sugano S."/>
        </authorList>
    </citation>
    <scope>NUCLEOTIDE SEQUENCE [LARGE SCALE MRNA] (ISOFORM 1)</scope>
    <source>
        <tissue>Trachea</tissue>
    </source>
</reference>
<reference key="3">
    <citation type="submission" date="2003-01" db="EMBL/GenBank/DDBJ databases">
        <title>Full-length cDNA libraries and normalization.</title>
        <authorList>
            <person name="Li W.B."/>
            <person name="Gruber C."/>
            <person name="Jessee J."/>
            <person name="Polayes D."/>
        </authorList>
    </citation>
    <scope>NUCLEOTIDE SEQUENCE [LARGE SCALE MRNA] (ISOFORMS 1 AND 2)</scope>
    <source>
        <tissue>Placenta</tissue>
    </source>
</reference>
<reference key="4">
    <citation type="journal article" date="2003" name="Nature">
        <title>The DNA sequence and analysis of human chromosome 14.</title>
        <authorList>
            <person name="Heilig R."/>
            <person name="Eckenberg R."/>
            <person name="Petit J.-L."/>
            <person name="Fonknechten N."/>
            <person name="Da Silva C."/>
            <person name="Cattolico L."/>
            <person name="Levy M."/>
            <person name="Barbe V."/>
            <person name="De Berardinis V."/>
            <person name="Ureta-Vidal A."/>
            <person name="Pelletier E."/>
            <person name="Vico V."/>
            <person name="Anthouard V."/>
            <person name="Rowen L."/>
            <person name="Madan A."/>
            <person name="Qin S."/>
            <person name="Sun H."/>
            <person name="Du H."/>
            <person name="Pepin K."/>
            <person name="Artiguenave F."/>
            <person name="Robert C."/>
            <person name="Cruaud C."/>
            <person name="Bruels T."/>
            <person name="Jaillon O."/>
            <person name="Friedlander L."/>
            <person name="Samson G."/>
            <person name="Brottier P."/>
            <person name="Cure S."/>
            <person name="Segurens B."/>
            <person name="Aniere F."/>
            <person name="Samain S."/>
            <person name="Crespeau H."/>
            <person name="Abbasi N."/>
            <person name="Aiach N."/>
            <person name="Boscus D."/>
            <person name="Dickhoff R."/>
            <person name="Dors M."/>
            <person name="Dubois I."/>
            <person name="Friedman C."/>
            <person name="Gouyvenoux M."/>
            <person name="James R."/>
            <person name="Madan A."/>
            <person name="Mairey-Estrada B."/>
            <person name="Mangenot S."/>
            <person name="Martins N."/>
            <person name="Menard M."/>
            <person name="Oztas S."/>
            <person name="Ratcliffe A."/>
            <person name="Shaffer T."/>
            <person name="Trask B."/>
            <person name="Vacherie B."/>
            <person name="Bellemere C."/>
            <person name="Belser C."/>
            <person name="Besnard-Gonnet M."/>
            <person name="Bartol-Mavel D."/>
            <person name="Boutard M."/>
            <person name="Briez-Silla S."/>
            <person name="Combette S."/>
            <person name="Dufosse-Laurent V."/>
            <person name="Ferron C."/>
            <person name="Lechaplais C."/>
            <person name="Louesse C."/>
            <person name="Muselet D."/>
            <person name="Magdelenat G."/>
            <person name="Pateau E."/>
            <person name="Petit E."/>
            <person name="Sirvain-Trukniewicz P."/>
            <person name="Trybou A."/>
            <person name="Vega-Czarny N."/>
            <person name="Bataille E."/>
            <person name="Bluet E."/>
            <person name="Bordelais I."/>
            <person name="Dubois M."/>
            <person name="Dumont C."/>
            <person name="Guerin T."/>
            <person name="Haffray S."/>
            <person name="Hammadi R."/>
            <person name="Muanga J."/>
            <person name="Pellouin V."/>
            <person name="Robert D."/>
            <person name="Wunderle E."/>
            <person name="Gauguet G."/>
            <person name="Roy A."/>
            <person name="Sainte-Marthe L."/>
            <person name="Verdier J."/>
            <person name="Verdier-Discala C."/>
            <person name="Hillier L.W."/>
            <person name="Fulton L."/>
            <person name="McPherson J."/>
            <person name="Matsuda F."/>
            <person name="Wilson R."/>
            <person name="Scarpelli C."/>
            <person name="Gyapay G."/>
            <person name="Wincker P."/>
            <person name="Saurin W."/>
            <person name="Quetier F."/>
            <person name="Waterston R."/>
            <person name="Hood L."/>
            <person name="Weissenbach J."/>
        </authorList>
    </citation>
    <scope>NUCLEOTIDE SEQUENCE [LARGE SCALE GENOMIC DNA]</scope>
</reference>
<reference key="5">
    <citation type="submission" date="2005-09" db="EMBL/GenBank/DDBJ databases">
        <authorList>
            <person name="Mural R.J."/>
            <person name="Istrail S."/>
            <person name="Sutton G.G."/>
            <person name="Florea L."/>
            <person name="Halpern A.L."/>
            <person name="Mobarry C.M."/>
            <person name="Lippert R."/>
            <person name="Walenz B."/>
            <person name="Shatkay H."/>
            <person name="Dew I."/>
            <person name="Miller J.R."/>
            <person name="Flanigan M.J."/>
            <person name="Edwards N.J."/>
            <person name="Bolanos R."/>
            <person name="Fasulo D."/>
            <person name="Halldorsson B.V."/>
            <person name="Hannenhalli S."/>
            <person name="Turner R."/>
            <person name="Yooseph S."/>
            <person name="Lu F."/>
            <person name="Nusskern D.R."/>
            <person name="Shue B.C."/>
            <person name="Zheng X.H."/>
            <person name="Zhong F."/>
            <person name="Delcher A.L."/>
            <person name="Huson D.H."/>
            <person name="Kravitz S.A."/>
            <person name="Mouchard L."/>
            <person name="Reinert K."/>
            <person name="Remington K.A."/>
            <person name="Clark A.G."/>
            <person name="Waterman M.S."/>
            <person name="Eichler E.E."/>
            <person name="Adams M.D."/>
            <person name="Hunkapiller M.W."/>
            <person name="Myers E.W."/>
            <person name="Venter J.C."/>
        </authorList>
    </citation>
    <scope>NUCLEOTIDE SEQUENCE [LARGE SCALE GENOMIC DNA]</scope>
</reference>
<reference key="6">
    <citation type="journal article" date="2004" name="Genome Res.">
        <title>The status, quality, and expansion of the NIH full-length cDNA project: the Mammalian Gene Collection (MGC).</title>
        <authorList>
            <consortium name="The MGC Project Team"/>
        </authorList>
    </citation>
    <scope>NUCLEOTIDE SEQUENCE [LARGE SCALE MRNA] (ISOFORM 1)</scope>
    <source>
        <tissue>Lung</tissue>
    </source>
</reference>
<reference key="7">
    <citation type="journal article" date="2011" name="BMC Syst. Biol.">
        <title>Initial characterization of the human central proteome.</title>
        <authorList>
            <person name="Burkard T.R."/>
            <person name="Planyavsky M."/>
            <person name="Kaupe I."/>
            <person name="Breitwieser F.P."/>
            <person name="Buerckstuemmer T."/>
            <person name="Bennett K.L."/>
            <person name="Superti-Furga G."/>
            <person name="Colinge J."/>
        </authorList>
    </citation>
    <scope>IDENTIFICATION BY MASS SPECTROMETRY [LARGE SCALE ANALYSIS]</scope>
</reference>
<reference key="8">
    <citation type="journal article" date="2012" name="Mol. Cell. Proteomics">
        <title>Comparative large-scale characterisation of plant vs. mammal proteins reveals similar and idiosyncratic N-alpha acetylation features.</title>
        <authorList>
            <person name="Bienvenut W.V."/>
            <person name="Sumpton D."/>
            <person name="Martinez A."/>
            <person name="Lilla S."/>
            <person name="Espagne C."/>
            <person name="Meinnel T."/>
            <person name="Giglione C."/>
        </authorList>
    </citation>
    <scope>ACETYLATION [LARGE SCALE ANALYSIS] AT ALA-2</scope>
    <scope>CLEAVAGE OF INITIATOR METHIONINE [LARGE SCALE ANALYSIS]</scope>
    <scope>IDENTIFICATION BY MASS SPECTROMETRY [LARGE SCALE ANALYSIS]</scope>
</reference>
<reference key="9">
    <citation type="journal article" date="2012" name="Proc. Natl. Acad. Sci. U.S.A.">
        <title>N-terminal acetylome analyses and functional insights of the N-terminal acetyltransferase NatB.</title>
        <authorList>
            <person name="Van Damme P."/>
            <person name="Lasa M."/>
            <person name="Polevoda B."/>
            <person name="Gazquez C."/>
            <person name="Elosegui-Artola A."/>
            <person name="Kim D.S."/>
            <person name="De Juan-Pardo E."/>
            <person name="Demeyer K."/>
            <person name="Hole K."/>
            <person name="Larrea E."/>
            <person name="Timmerman E."/>
            <person name="Prieto J."/>
            <person name="Arnesen T."/>
            <person name="Sherman F."/>
            <person name="Gevaert K."/>
            <person name="Aldabe R."/>
        </authorList>
    </citation>
    <scope>ACETYLATION [LARGE SCALE ANALYSIS] AT ALA-2</scope>
    <scope>CLEAVAGE OF INITIATOR METHIONINE [LARGE SCALE ANALYSIS]</scope>
    <scope>IDENTIFICATION BY MASS SPECTROMETRY [LARGE SCALE ANALYSIS]</scope>
</reference>
<reference key="10">
    <citation type="journal article" date="2013" name="Biochim. Biophys. Acta">
        <title>Structural determinants of specificity and catalytic mechanism in mammalian 25-kDa thiamine triphosphatase.</title>
        <authorList>
            <person name="Delvaux D."/>
            <person name="Kerff F."/>
            <person name="Murty M.R."/>
            <person name="Lakaye B."/>
            <person name="Czerniecki J."/>
            <person name="Kohn G."/>
            <person name="Wins P."/>
            <person name="Herman R."/>
            <person name="Gabelica V."/>
            <person name="Heuze F."/>
            <person name="Tordoir X."/>
            <person name="Maree R."/>
            <person name="Matagne A."/>
            <person name="Charlier P."/>
            <person name="De Pauw E."/>
            <person name="Bettendorff L."/>
        </authorList>
    </citation>
    <scope>X-RAY CRYSTALLOGRAPHY (2.30 ANGSTROMS) IN COMPLEX WITH TRIPHOSPHATE</scope>
    <scope>CATALYTIC ACTIVITY</scope>
    <scope>FUNCTION</scope>
    <scope>COFACTOR</scope>
    <scope>BIOPHYSICOCHEMICAL PROPERTIES</scope>
    <scope>SUBUNIT</scope>
    <scope>MUTAGENESIS OF LYS-11; ASP-37; TYR-39; TRP-53; LYS-65; TYR-79; GLU-81; ASP-147 AND LYS-193</scope>
</reference>
<feature type="initiator methionine" description="Removed" evidence="7 8">
    <location>
        <position position="1"/>
    </location>
</feature>
<feature type="chain" id="PRO_0000221490" description="Thiamine-triphosphatase">
    <location>
        <begin position="2"/>
        <end position="230"/>
    </location>
</feature>
<feature type="domain" description="CYTH" evidence="2">
    <location>
        <begin position="5"/>
        <end position="201"/>
    </location>
</feature>
<feature type="binding site" evidence="1">
    <location>
        <position position="7"/>
    </location>
    <ligand>
        <name>Mg(2+)</name>
        <dbReference type="ChEBI" id="CHEBI:18420"/>
    </ligand>
</feature>
<feature type="binding site" evidence="1">
    <location>
        <position position="9"/>
    </location>
    <ligand>
        <name>Mg(2+)</name>
        <dbReference type="ChEBI" id="CHEBI:18420"/>
    </ligand>
</feature>
<feature type="binding site">
    <location>
        <position position="11"/>
    </location>
    <ligand>
        <name>substrate</name>
    </ligand>
</feature>
<feature type="binding site">
    <location>
        <position position="55"/>
    </location>
    <ligand>
        <name>substrate</name>
    </ligand>
</feature>
<feature type="binding site">
    <location>
        <position position="57"/>
    </location>
    <ligand>
        <name>substrate</name>
    </ligand>
</feature>
<feature type="binding site">
    <location>
        <position position="65"/>
    </location>
    <ligand>
        <name>substrate</name>
    </ligand>
</feature>
<feature type="binding site">
    <location>
        <position position="125"/>
    </location>
    <ligand>
        <name>substrate</name>
    </ligand>
</feature>
<feature type="binding site" evidence="1">
    <location>
        <position position="145"/>
    </location>
    <ligand>
        <name>Mg(2+)</name>
        <dbReference type="ChEBI" id="CHEBI:18420"/>
    </ligand>
</feature>
<feature type="binding site" evidence="1">
    <location>
        <position position="157"/>
    </location>
    <ligand>
        <name>Mg(2+)</name>
        <dbReference type="ChEBI" id="CHEBI:18420"/>
    </ligand>
</feature>
<feature type="binding site">
    <location>
        <position position="157"/>
    </location>
    <ligand>
        <name>substrate</name>
    </ligand>
</feature>
<feature type="binding site" evidence="1">
    <location>
        <position position="159"/>
    </location>
    <ligand>
        <name>Mg(2+)</name>
        <dbReference type="ChEBI" id="CHEBI:18420"/>
    </ligand>
</feature>
<feature type="binding site" evidence="6">
    <location>
        <position position="193"/>
    </location>
    <ligand>
        <name>substrate</name>
    </ligand>
</feature>
<feature type="modified residue" description="N-acetylalanine" evidence="7 8">
    <location>
        <position position="2"/>
    </location>
</feature>
<feature type="splice variant" id="VSP_047213" description="In isoform 2." evidence="5">
    <original>LRADGLGAGD</original>
    <variation>CLHRRQHQPS</variation>
    <location>
        <begin position="96"/>
        <end position="105"/>
    </location>
</feature>
<feature type="splice variant" id="VSP_047214" description="In isoform 2." evidence="5">
    <location>
        <begin position="106"/>
        <end position="230"/>
    </location>
</feature>
<feature type="sequence variant" id="VAR_062152" description="In dbSNP:rs34015250.">
    <original>H</original>
    <variation>R</variation>
    <location>
        <position position="176"/>
    </location>
</feature>
<feature type="mutagenesis site" description="Mildly decreases enzyme activity." evidence="4">
    <original>K</original>
    <variation>A</variation>
    <location>
        <position position="11"/>
    </location>
</feature>
<feature type="mutagenesis site" description="Strongly decreases affinity for thiamine triphosphate and enzyme activity." evidence="4">
    <original>D</original>
    <variation>A</variation>
    <location>
        <position position="37"/>
    </location>
</feature>
<feature type="mutagenesis site" description="Strongly decreases affinity for thiamine triphosphate and enzyme activity." evidence="4">
    <original>Y</original>
    <variation>A</variation>
    <location>
        <position position="39"/>
    </location>
</feature>
<feature type="mutagenesis site" description="Strongly decreases affinity for thiamine triphosphate and enzyme activity." evidence="4">
    <original>W</original>
    <variation>A</variation>
    <location>
        <position position="53"/>
    </location>
</feature>
<feature type="mutagenesis site" description="Strongly decreases enzyme activity. No effect on affinity for thiamine triphosphate." evidence="4">
    <original>K</original>
    <variation>A</variation>
    <location>
        <position position="65"/>
    </location>
</feature>
<feature type="mutagenesis site" description="Decreases enzyme activity." evidence="4">
    <original>Y</original>
    <variation>A</variation>
    <location>
        <position position="79"/>
    </location>
</feature>
<feature type="mutagenesis site" description="Mildly decreases enzyme activity." evidence="4">
    <original>E</original>
    <variation>A</variation>
    <location>
        <position position="81"/>
    </location>
</feature>
<feature type="mutagenesis site" description="Strongly decreases affinity for thiamine triphosphate and enzyme activity." evidence="4">
    <original>D</original>
    <variation>A</variation>
    <location>
        <position position="147"/>
    </location>
</feature>
<feature type="mutagenesis site" description="Strongly decreases affinity for thiamine triphosphate and enzyme activity." evidence="4">
    <original>K</original>
    <variation>A</variation>
    <location>
        <position position="193"/>
    </location>
</feature>
<feature type="strand" evidence="9">
    <location>
        <begin position="5"/>
        <end position="12"/>
    </location>
</feature>
<feature type="helix" evidence="9">
    <location>
        <begin position="18"/>
        <end position="24"/>
    </location>
</feature>
<feature type="strand" evidence="9">
    <location>
        <begin position="28"/>
        <end position="41"/>
    </location>
</feature>
<feature type="helix" evidence="9">
    <location>
        <begin position="46"/>
        <end position="49"/>
    </location>
</feature>
<feature type="strand" evidence="9">
    <location>
        <begin position="53"/>
        <end position="57"/>
    </location>
</feature>
<feature type="turn" evidence="9">
    <location>
        <begin position="58"/>
        <end position="60"/>
    </location>
</feature>
<feature type="strand" evidence="9">
    <location>
        <begin position="61"/>
        <end position="70"/>
    </location>
</feature>
<feature type="strand" evidence="9">
    <location>
        <begin position="77"/>
        <end position="82"/>
    </location>
</feature>
<feature type="helix" evidence="9">
    <location>
        <begin position="85"/>
        <end position="96"/>
    </location>
</feature>
<feature type="helix" evidence="9">
    <location>
        <begin position="106"/>
        <end position="113"/>
    </location>
</feature>
<feature type="strand" evidence="9">
    <location>
        <begin position="116"/>
        <end position="131"/>
    </location>
</feature>
<feature type="helix" evidence="9">
    <location>
        <begin position="132"/>
        <end position="135"/>
    </location>
</feature>
<feature type="strand" evidence="9">
    <location>
        <begin position="137"/>
        <end position="139"/>
    </location>
</feature>
<feature type="strand" evidence="9">
    <location>
        <begin position="141"/>
        <end position="149"/>
    </location>
</feature>
<feature type="strand" evidence="9">
    <location>
        <begin position="154"/>
        <end position="164"/>
    </location>
</feature>
<feature type="helix" evidence="9">
    <location>
        <begin position="165"/>
        <end position="167"/>
    </location>
</feature>
<feature type="helix" evidence="9">
    <location>
        <begin position="168"/>
        <end position="181"/>
    </location>
</feature>
<feature type="helix" evidence="9">
    <location>
        <begin position="193"/>
        <end position="201"/>
    </location>
</feature>
<feature type="helix" evidence="9">
    <location>
        <begin position="203"/>
        <end position="213"/>
    </location>
</feature>
<gene>
    <name type="primary">THTPA</name>
</gene>
<name>THTPA_HUMAN</name>
<sequence length="230" mass="25566">MAQGLIEVERKFLPGPGTEERLQELGGTLEYRVTFRDTYYDTPELSLMQADHWLRRREDSGWELKCPGAAGVLGPHTEYKELTAEPTIVAQLCKVLRADGLGAGDVAAVLGPLGLQEVASFVTKRSAWKLVLLGADEEEPQLRVDLDTADFGYAVGEVEALVHEEAEVPTALEKIHRLSSMLGVPAQETAPAKLIVYLQRFRPQDYQRLLEVNSSRERPQETEDPDHCLG</sequence>
<proteinExistence type="evidence at protein level"/>
<evidence type="ECO:0000250" key="1"/>
<evidence type="ECO:0000255" key="2">
    <source>
        <dbReference type="PROSITE-ProRule" id="PRU01044"/>
    </source>
</evidence>
<evidence type="ECO:0000269" key="3">
    <source>
    </source>
</evidence>
<evidence type="ECO:0000269" key="4">
    <source>
    </source>
</evidence>
<evidence type="ECO:0000303" key="5">
    <source ref="3"/>
</evidence>
<evidence type="ECO:0000305" key="6"/>
<evidence type="ECO:0007744" key="7">
    <source>
    </source>
</evidence>
<evidence type="ECO:0007744" key="8">
    <source>
    </source>
</evidence>
<evidence type="ECO:0007829" key="9">
    <source>
        <dbReference type="PDB" id="3BHD"/>
    </source>
</evidence>
<keyword id="KW-0002">3D-structure</keyword>
<keyword id="KW-0007">Acetylation</keyword>
<keyword id="KW-0025">Alternative splicing</keyword>
<keyword id="KW-0963">Cytoplasm</keyword>
<keyword id="KW-0378">Hydrolase</keyword>
<keyword id="KW-0460">Magnesium</keyword>
<keyword id="KW-0479">Metal-binding</keyword>
<keyword id="KW-1267">Proteomics identification</keyword>
<keyword id="KW-1185">Reference proteome</keyword>
<dbReference type="EC" id="3.6.1.28"/>
<dbReference type="EMBL" id="AF432862">
    <property type="protein sequence ID" value="AAM22403.1"/>
    <property type="molecule type" value="mRNA"/>
</dbReference>
<dbReference type="EMBL" id="AK057691">
    <property type="protein sequence ID" value="BAB71546.1"/>
    <property type="molecule type" value="mRNA"/>
</dbReference>
<dbReference type="EMBL" id="BX161435">
    <property type="protein sequence ID" value="CAD61907.1"/>
    <property type="molecule type" value="mRNA"/>
</dbReference>
<dbReference type="EMBL" id="BX378775">
    <property type="status" value="NOT_ANNOTATED_CDS"/>
    <property type="molecule type" value="mRNA"/>
</dbReference>
<dbReference type="EMBL" id="AL135999">
    <property type="status" value="NOT_ANNOTATED_CDS"/>
    <property type="molecule type" value="Genomic_DNA"/>
</dbReference>
<dbReference type="EMBL" id="CH471078">
    <property type="protein sequence ID" value="EAW66140.1"/>
    <property type="molecule type" value="Genomic_DNA"/>
</dbReference>
<dbReference type="EMBL" id="CH471078">
    <property type="protein sequence ID" value="EAW66141.1"/>
    <property type="molecule type" value="Genomic_DNA"/>
</dbReference>
<dbReference type="EMBL" id="BC002984">
    <property type="protein sequence ID" value="AAH02984.1"/>
    <property type="molecule type" value="mRNA"/>
</dbReference>
<dbReference type="CCDS" id="CCDS32053.1">
    <molecule id="Q9BU02-1"/>
</dbReference>
<dbReference type="CCDS" id="CCDS58307.1">
    <molecule id="Q9BU02-2"/>
</dbReference>
<dbReference type="RefSeq" id="NP_001119811.1">
    <molecule id="Q9BU02-1"/>
    <property type="nucleotide sequence ID" value="NM_001126339.3"/>
</dbReference>
<dbReference type="RefSeq" id="NP_001242991.1">
    <molecule id="Q9BU02-2"/>
    <property type="nucleotide sequence ID" value="NM_001256062.2"/>
</dbReference>
<dbReference type="RefSeq" id="NP_001243250.1">
    <molecule id="Q9BU02-2"/>
    <property type="nucleotide sequence ID" value="NM_001256321.2"/>
</dbReference>
<dbReference type="RefSeq" id="NP_001243251.1">
    <property type="nucleotide sequence ID" value="NM_001256322.2"/>
</dbReference>
<dbReference type="RefSeq" id="NP_001243252.1">
    <property type="nucleotide sequence ID" value="NM_001256323.2"/>
</dbReference>
<dbReference type="RefSeq" id="NP_077304.1">
    <molecule id="Q9BU02-1"/>
    <property type="nucleotide sequence ID" value="NM_024328.6"/>
</dbReference>
<dbReference type="PDB" id="3BHD">
    <property type="method" value="X-ray"/>
    <property type="resolution" value="1.50 A"/>
    <property type="chains" value="A/B=1-215"/>
</dbReference>
<dbReference type="PDB" id="3TVL">
    <property type="method" value="X-ray"/>
    <property type="resolution" value="2.30 A"/>
    <property type="chains" value="A/B=1-230"/>
</dbReference>
<dbReference type="PDBsum" id="3BHD"/>
<dbReference type="PDBsum" id="3TVL"/>
<dbReference type="SMR" id="Q9BU02"/>
<dbReference type="BioGRID" id="122595">
    <property type="interactions" value="79"/>
</dbReference>
<dbReference type="FunCoup" id="Q9BU02">
    <property type="interactions" value="662"/>
</dbReference>
<dbReference type="IntAct" id="Q9BU02">
    <property type="interactions" value="48"/>
</dbReference>
<dbReference type="STRING" id="9606.ENSP00000288014"/>
<dbReference type="DrugBank" id="DB00152">
    <property type="generic name" value="Thiamine"/>
</dbReference>
<dbReference type="DrugCentral" id="Q9BU02"/>
<dbReference type="iPTMnet" id="Q9BU02"/>
<dbReference type="MetOSite" id="Q9BU02"/>
<dbReference type="PhosphoSitePlus" id="Q9BU02"/>
<dbReference type="BioMuta" id="THTPA"/>
<dbReference type="DMDM" id="37538018"/>
<dbReference type="jPOST" id="Q9BU02"/>
<dbReference type="MassIVE" id="Q9BU02"/>
<dbReference type="PaxDb" id="9606-ENSP00000288014"/>
<dbReference type="PeptideAtlas" id="Q9BU02"/>
<dbReference type="ProteomicsDB" id="33249"/>
<dbReference type="ProteomicsDB" id="79039">
    <molecule id="Q9BU02-1"/>
</dbReference>
<dbReference type="Pumba" id="Q9BU02"/>
<dbReference type="Antibodypedia" id="55506">
    <property type="antibodies" value="225 antibodies from 22 providers"/>
</dbReference>
<dbReference type="DNASU" id="79178"/>
<dbReference type="Ensembl" id="ENST00000288014.7">
    <molecule id="Q9BU02-1"/>
    <property type="protein sequence ID" value="ENSP00000288014.6"/>
    <property type="gene ID" value="ENSG00000259431.6"/>
</dbReference>
<dbReference type="Ensembl" id="ENST00000404535.3">
    <molecule id="Q9BU02-1"/>
    <property type="protein sequence ID" value="ENSP00000384580.3"/>
    <property type="gene ID" value="ENSG00000259431.6"/>
</dbReference>
<dbReference type="Ensembl" id="ENST00000554789.1">
    <molecule id="Q9BU02-2"/>
    <property type="protein sequence ID" value="ENSP00000450459.1"/>
    <property type="gene ID" value="ENSG00000259431.6"/>
</dbReference>
<dbReference type="Ensembl" id="ENST00000556015.5">
    <molecule id="Q9BU02-2"/>
    <property type="protein sequence ID" value="ENSP00000451835.1"/>
    <property type="gene ID" value="ENSG00000259431.6"/>
</dbReference>
<dbReference type="GeneID" id="79178"/>
<dbReference type="KEGG" id="hsa:79178"/>
<dbReference type="MANE-Select" id="ENST00000288014.7">
    <property type="protein sequence ID" value="ENSP00000288014.6"/>
    <property type="RefSeq nucleotide sequence ID" value="NM_024328.6"/>
    <property type="RefSeq protein sequence ID" value="NP_077304.1"/>
</dbReference>
<dbReference type="UCSC" id="uc001wkg.7">
    <molecule id="Q9BU02-1"/>
    <property type="organism name" value="human"/>
</dbReference>
<dbReference type="AGR" id="HGNC:18987"/>
<dbReference type="CTD" id="79178"/>
<dbReference type="DisGeNET" id="79178"/>
<dbReference type="GeneCards" id="THTPA"/>
<dbReference type="HGNC" id="HGNC:18987">
    <property type="gene designation" value="THTPA"/>
</dbReference>
<dbReference type="HPA" id="ENSG00000259431">
    <property type="expression patterns" value="Low tissue specificity"/>
</dbReference>
<dbReference type="MalaCards" id="THTPA"/>
<dbReference type="MIM" id="611612">
    <property type="type" value="gene"/>
</dbReference>
<dbReference type="neXtProt" id="NX_Q9BU02"/>
<dbReference type="OpenTargets" id="ENSG00000259431"/>
<dbReference type="PharmGKB" id="PA38774"/>
<dbReference type="VEuPathDB" id="HostDB:ENSG00000259431"/>
<dbReference type="eggNOG" id="ENOG502S5G9">
    <property type="taxonomic scope" value="Eukaryota"/>
</dbReference>
<dbReference type="GeneTree" id="ENSGT00390000005996"/>
<dbReference type="HOGENOM" id="CLU_105907_0_0_1"/>
<dbReference type="InParanoid" id="Q9BU02"/>
<dbReference type="OMA" id="HWLRHRE"/>
<dbReference type="OrthoDB" id="442176at2759"/>
<dbReference type="PAN-GO" id="Q9BU02">
    <property type="GO annotations" value="4 GO annotations based on evolutionary models"/>
</dbReference>
<dbReference type="PhylomeDB" id="Q9BU02"/>
<dbReference type="TreeFam" id="TF333398"/>
<dbReference type="BRENDA" id="3.6.1.28">
    <property type="organism ID" value="2681"/>
</dbReference>
<dbReference type="PathwayCommons" id="Q9BU02"/>
<dbReference type="Reactome" id="R-HSA-196819">
    <property type="pathway name" value="Vitamin B1 (thiamin) metabolism"/>
</dbReference>
<dbReference type="SignaLink" id="Q9BU02"/>
<dbReference type="BioGRID-ORCS" id="79178">
    <property type="hits" value="12 hits in 1160 CRISPR screens"/>
</dbReference>
<dbReference type="ChiTaRS" id="THTPA">
    <property type="organism name" value="human"/>
</dbReference>
<dbReference type="EvolutionaryTrace" id="Q9BU02"/>
<dbReference type="GenomeRNAi" id="79178"/>
<dbReference type="Pharos" id="Q9BU02">
    <property type="development level" value="Tbio"/>
</dbReference>
<dbReference type="PRO" id="PR:Q9BU02"/>
<dbReference type="Proteomes" id="UP000005640">
    <property type="component" value="Chromosome 14"/>
</dbReference>
<dbReference type="RNAct" id="Q9BU02">
    <property type="molecule type" value="protein"/>
</dbReference>
<dbReference type="Bgee" id="ENSG00000259431">
    <property type="expression patterns" value="Expressed in prefrontal cortex and 99 other cell types or tissues"/>
</dbReference>
<dbReference type="ExpressionAtlas" id="Q9BU02">
    <property type="expression patterns" value="baseline and differential"/>
</dbReference>
<dbReference type="GO" id="GO:0005829">
    <property type="term" value="C:cytosol"/>
    <property type="evidence" value="ECO:0000304"/>
    <property type="project" value="Reactome"/>
</dbReference>
<dbReference type="GO" id="GO:0016787">
    <property type="term" value="F:hydrolase activity"/>
    <property type="evidence" value="ECO:0000304"/>
    <property type="project" value="UniProtKB"/>
</dbReference>
<dbReference type="GO" id="GO:0000287">
    <property type="term" value="F:magnesium ion binding"/>
    <property type="evidence" value="ECO:0000250"/>
    <property type="project" value="UniProtKB"/>
</dbReference>
<dbReference type="GO" id="GO:0050333">
    <property type="term" value="F:thiamine triphosphate phosphatase activity"/>
    <property type="evidence" value="ECO:0000314"/>
    <property type="project" value="UniProtKB"/>
</dbReference>
<dbReference type="GO" id="GO:0016311">
    <property type="term" value="P:dephosphorylation"/>
    <property type="evidence" value="ECO:0000314"/>
    <property type="project" value="UniProtKB"/>
</dbReference>
<dbReference type="GO" id="GO:0006091">
    <property type="term" value="P:generation of precursor metabolites and energy"/>
    <property type="evidence" value="ECO:0000303"/>
    <property type="project" value="UniProtKB"/>
</dbReference>
<dbReference type="GO" id="GO:0009229">
    <property type="term" value="P:thiamine diphosphate biosynthetic process"/>
    <property type="evidence" value="ECO:0007669"/>
    <property type="project" value="Ensembl"/>
</dbReference>
<dbReference type="GO" id="GO:0042357">
    <property type="term" value="P:thiamine diphosphate metabolic process"/>
    <property type="evidence" value="ECO:0000250"/>
    <property type="project" value="UniProtKB"/>
</dbReference>
<dbReference type="GO" id="GO:0006772">
    <property type="term" value="P:thiamine metabolic process"/>
    <property type="evidence" value="ECO:0000304"/>
    <property type="project" value="UniProtKB"/>
</dbReference>
<dbReference type="CDD" id="cd07758">
    <property type="entry name" value="ThTPase"/>
    <property type="match status" value="1"/>
</dbReference>
<dbReference type="FunFam" id="2.40.320.10:FF:000005">
    <property type="entry name" value="Thiamine-triphosphatase"/>
    <property type="match status" value="1"/>
</dbReference>
<dbReference type="Gene3D" id="2.40.320.10">
    <property type="entry name" value="Hypothetical Protein Pfu-838710-001"/>
    <property type="match status" value="1"/>
</dbReference>
<dbReference type="InterPro" id="IPR033469">
    <property type="entry name" value="CYTH-like_dom_sf"/>
</dbReference>
<dbReference type="InterPro" id="IPR023577">
    <property type="entry name" value="CYTH_domain"/>
</dbReference>
<dbReference type="InterPro" id="IPR039582">
    <property type="entry name" value="THTPA"/>
</dbReference>
<dbReference type="InterPro" id="IPR012177">
    <property type="entry name" value="ThTPase_euk"/>
</dbReference>
<dbReference type="PANTHER" id="PTHR14586">
    <property type="entry name" value="THIAMINE-TRIPHOSPHATASE"/>
    <property type="match status" value="1"/>
</dbReference>
<dbReference type="PANTHER" id="PTHR14586:SF1">
    <property type="entry name" value="THIAMINE-TRIPHOSPHATASE"/>
    <property type="match status" value="1"/>
</dbReference>
<dbReference type="Pfam" id="PF01928">
    <property type="entry name" value="CYTH"/>
    <property type="match status" value="1"/>
</dbReference>
<dbReference type="PIRSF" id="PIRSF036561">
    <property type="entry name" value="ThTPase"/>
    <property type="match status" value="1"/>
</dbReference>
<dbReference type="SMART" id="SM01118">
    <property type="entry name" value="CYTH"/>
    <property type="match status" value="1"/>
</dbReference>
<dbReference type="SUPFAM" id="SSF55154">
    <property type="entry name" value="CYTH-like phosphatases"/>
    <property type="match status" value="1"/>
</dbReference>
<dbReference type="PROSITE" id="PS51707">
    <property type="entry name" value="CYTH"/>
    <property type="match status" value="1"/>
</dbReference>
<accession>Q9BU02</accession>
<accession>D3DS50</accession>
<accession>G3V4J3</accession>
<protein>
    <recommendedName>
        <fullName>Thiamine-triphosphatase</fullName>
        <shortName>ThTPase</shortName>
        <ecNumber>3.6.1.28</ecNumber>
    </recommendedName>
</protein>